<protein>
    <recommendedName>
        <fullName evidence="1">Large ribosomal subunit protein uL16c</fullName>
    </recommendedName>
    <alternativeName>
        <fullName evidence="2">50S ribosomal protein L16, chloroplastic</fullName>
    </alternativeName>
</protein>
<geneLocation type="chloroplast"/>
<dbReference type="EMBL" id="DQ923117">
    <property type="protein sequence ID" value="ABI49902.1"/>
    <property type="molecule type" value="Genomic_DNA"/>
</dbReference>
<dbReference type="RefSeq" id="YP_740688.1">
    <property type="nucleotide sequence ID" value="NC_008336.1"/>
</dbReference>
<dbReference type="SMR" id="Q09FS3"/>
<dbReference type="GeneID" id="4271699"/>
<dbReference type="GO" id="GO:0009507">
    <property type="term" value="C:chloroplast"/>
    <property type="evidence" value="ECO:0007669"/>
    <property type="project" value="UniProtKB-SubCell"/>
</dbReference>
<dbReference type="GO" id="GO:0005762">
    <property type="term" value="C:mitochondrial large ribosomal subunit"/>
    <property type="evidence" value="ECO:0007669"/>
    <property type="project" value="TreeGrafter"/>
</dbReference>
<dbReference type="GO" id="GO:0019843">
    <property type="term" value="F:rRNA binding"/>
    <property type="evidence" value="ECO:0007669"/>
    <property type="project" value="InterPro"/>
</dbReference>
<dbReference type="GO" id="GO:0003735">
    <property type="term" value="F:structural constituent of ribosome"/>
    <property type="evidence" value="ECO:0007669"/>
    <property type="project" value="InterPro"/>
</dbReference>
<dbReference type="GO" id="GO:0032543">
    <property type="term" value="P:mitochondrial translation"/>
    <property type="evidence" value="ECO:0007669"/>
    <property type="project" value="TreeGrafter"/>
</dbReference>
<dbReference type="CDD" id="cd01433">
    <property type="entry name" value="Ribosomal_L16_L10e"/>
    <property type="match status" value="1"/>
</dbReference>
<dbReference type="FunFam" id="3.90.1170.10:FF:000001">
    <property type="entry name" value="50S ribosomal protein L16"/>
    <property type="match status" value="1"/>
</dbReference>
<dbReference type="Gene3D" id="3.90.1170.10">
    <property type="entry name" value="Ribosomal protein L10e/L16"/>
    <property type="match status" value="1"/>
</dbReference>
<dbReference type="HAMAP" id="MF_01342">
    <property type="entry name" value="Ribosomal_uL16"/>
    <property type="match status" value="1"/>
</dbReference>
<dbReference type="InterPro" id="IPR047873">
    <property type="entry name" value="Ribosomal_uL16"/>
</dbReference>
<dbReference type="InterPro" id="IPR000114">
    <property type="entry name" value="Ribosomal_uL16_bact-type"/>
</dbReference>
<dbReference type="InterPro" id="IPR020798">
    <property type="entry name" value="Ribosomal_uL16_CS"/>
</dbReference>
<dbReference type="InterPro" id="IPR016180">
    <property type="entry name" value="Ribosomal_uL16_dom"/>
</dbReference>
<dbReference type="InterPro" id="IPR036920">
    <property type="entry name" value="Ribosomal_uL16_sf"/>
</dbReference>
<dbReference type="NCBIfam" id="TIGR01164">
    <property type="entry name" value="rplP_bact"/>
    <property type="match status" value="1"/>
</dbReference>
<dbReference type="PANTHER" id="PTHR12220">
    <property type="entry name" value="50S/60S RIBOSOMAL PROTEIN L16"/>
    <property type="match status" value="1"/>
</dbReference>
<dbReference type="PANTHER" id="PTHR12220:SF13">
    <property type="entry name" value="LARGE RIBOSOMAL SUBUNIT PROTEIN UL16M"/>
    <property type="match status" value="1"/>
</dbReference>
<dbReference type="Pfam" id="PF00252">
    <property type="entry name" value="Ribosomal_L16"/>
    <property type="match status" value="1"/>
</dbReference>
<dbReference type="PRINTS" id="PR00060">
    <property type="entry name" value="RIBOSOMALL16"/>
</dbReference>
<dbReference type="SUPFAM" id="SSF54686">
    <property type="entry name" value="Ribosomal protein L16p/L10e"/>
    <property type="match status" value="1"/>
</dbReference>
<dbReference type="PROSITE" id="PS00586">
    <property type="entry name" value="RIBOSOMAL_L16_1"/>
    <property type="match status" value="1"/>
</dbReference>
<dbReference type="PROSITE" id="PS00701">
    <property type="entry name" value="RIBOSOMAL_L16_2"/>
    <property type="match status" value="1"/>
</dbReference>
<organism>
    <name type="scientific">Nandina domestica</name>
    <name type="common">Heavenly bamboo</name>
    <dbReference type="NCBI Taxonomy" id="41776"/>
    <lineage>
        <taxon>Eukaryota</taxon>
        <taxon>Viridiplantae</taxon>
        <taxon>Streptophyta</taxon>
        <taxon>Embryophyta</taxon>
        <taxon>Tracheophyta</taxon>
        <taxon>Spermatophyta</taxon>
        <taxon>Magnoliopsida</taxon>
        <taxon>Ranunculales</taxon>
        <taxon>Berberidaceae</taxon>
        <taxon>Nandinoideae</taxon>
        <taxon>Nandineae</taxon>
        <taxon>Nandina</taxon>
    </lineage>
</organism>
<reference key="1">
    <citation type="journal article" date="2006" name="BMC Plant Biol.">
        <title>Rapid and accurate pyrosequencing of angiosperm plastid genomes.</title>
        <authorList>
            <person name="Moore M.J."/>
            <person name="Dhingra A."/>
            <person name="Soltis P.S."/>
            <person name="Shaw R."/>
            <person name="Farmerie W.G."/>
            <person name="Folta K.M."/>
            <person name="Soltis D.E."/>
        </authorList>
    </citation>
    <scope>NUCLEOTIDE SEQUENCE [LARGE SCALE GENOMIC DNA]</scope>
</reference>
<name>RK16_NANDO</name>
<sequence>MLSPKRTRFRKQHRGRMKGISYRGNHICFGRYALQALEPAWITSRQIEAGRKSMARYARRGGKIWIRIFPDKPVTVRPTETRMGSGKGSPEYWVSVVKPGRILYEMGGVSEIAAREAISIAASKMPIRTQFVIAG</sequence>
<accession>Q09FS3</accession>
<evidence type="ECO:0000255" key="1">
    <source>
        <dbReference type="HAMAP-Rule" id="MF_01342"/>
    </source>
</evidence>
<evidence type="ECO:0000305" key="2"/>
<feature type="chain" id="PRO_0000354646" description="Large ribosomal subunit protein uL16c">
    <location>
        <begin position="1"/>
        <end position="135"/>
    </location>
</feature>
<keyword id="KW-0150">Chloroplast</keyword>
<keyword id="KW-0934">Plastid</keyword>
<keyword id="KW-0687">Ribonucleoprotein</keyword>
<keyword id="KW-0689">Ribosomal protein</keyword>
<proteinExistence type="inferred from homology"/>
<gene>
    <name evidence="1" type="primary">rpl16</name>
</gene>
<comment type="subunit">
    <text evidence="1">Part of the 50S ribosomal subunit.</text>
</comment>
<comment type="subcellular location">
    <subcellularLocation>
        <location>Plastid</location>
        <location>Chloroplast</location>
    </subcellularLocation>
</comment>
<comment type="similarity">
    <text evidence="1">Belongs to the universal ribosomal protein uL16 family.</text>
</comment>